<sequence>MIQMQTSLEAADNSGARRLVCIKVLGGSQRRYAGIGDIIKVAVKEAIPRGKVKKGEVYNALIVRTRKGVRRADGSLIRFDNNAVVLLNNQLQPIGTRIFGPVTRELRVENFMRIVSLAPEVL</sequence>
<accession>Q3J8S4</accession>
<proteinExistence type="inferred from homology"/>
<evidence type="ECO:0000255" key="1">
    <source>
        <dbReference type="HAMAP-Rule" id="MF_01367"/>
    </source>
</evidence>
<evidence type="ECO:0000305" key="2"/>
<gene>
    <name evidence="1" type="primary">rplN</name>
    <name type="ordered locus">Noc_2314</name>
</gene>
<keyword id="KW-1185">Reference proteome</keyword>
<keyword id="KW-0687">Ribonucleoprotein</keyword>
<keyword id="KW-0689">Ribosomal protein</keyword>
<keyword id="KW-0694">RNA-binding</keyword>
<keyword id="KW-0699">rRNA-binding</keyword>
<comment type="function">
    <text evidence="1">Binds to 23S rRNA. Forms part of two intersubunit bridges in the 70S ribosome.</text>
</comment>
<comment type="subunit">
    <text evidence="1">Part of the 50S ribosomal subunit. Forms a cluster with proteins L3 and L19. In the 70S ribosome, L14 and L19 interact and together make contacts with the 16S rRNA in bridges B5 and B8.</text>
</comment>
<comment type="similarity">
    <text evidence="1">Belongs to the universal ribosomal protein uL14 family.</text>
</comment>
<dbReference type="EMBL" id="CP000127">
    <property type="protein sequence ID" value="ABA58772.1"/>
    <property type="molecule type" value="Genomic_DNA"/>
</dbReference>
<dbReference type="RefSeq" id="WP_011330921.1">
    <property type="nucleotide sequence ID" value="NC_007484.1"/>
</dbReference>
<dbReference type="SMR" id="Q3J8S4"/>
<dbReference type="FunCoup" id="Q3J8S4">
    <property type="interactions" value="612"/>
</dbReference>
<dbReference type="STRING" id="323261.Noc_2314"/>
<dbReference type="KEGG" id="noc:Noc_2314"/>
<dbReference type="eggNOG" id="COG0093">
    <property type="taxonomic scope" value="Bacteria"/>
</dbReference>
<dbReference type="HOGENOM" id="CLU_095071_2_1_6"/>
<dbReference type="InParanoid" id="Q3J8S4"/>
<dbReference type="Proteomes" id="UP000006838">
    <property type="component" value="Chromosome"/>
</dbReference>
<dbReference type="GO" id="GO:0022625">
    <property type="term" value="C:cytosolic large ribosomal subunit"/>
    <property type="evidence" value="ECO:0007669"/>
    <property type="project" value="TreeGrafter"/>
</dbReference>
<dbReference type="GO" id="GO:0070180">
    <property type="term" value="F:large ribosomal subunit rRNA binding"/>
    <property type="evidence" value="ECO:0007669"/>
    <property type="project" value="TreeGrafter"/>
</dbReference>
<dbReference type="GO" id="GO:0003735">
    <property type="term" value="F:structural constituent of ribosome"/>
    <property type="evidence" value="ECO:0007669"/>
    <property type="project" value="InterPro"/>
</dbReference>
<dbReference type="GO" id="GO:0006412">
    <property type="term" value="P:translation"/>
    <property type="evidence" value="ECO:0007669"/>
    <property type="project" value="UniProtKB-UniRule"/>
</dbReference>
<dbReference type="CDD" id="cd00337">
    <property type="entry name" value="Ribosomal_uL14"/>
    <property type="match status" value="1"/>
</dbReference>
<dbReference type="FunFam" id="2.40.150.20:FF:000001">
    <property type="entry name" value="50S ribosomal protein L14"/>
    <property type="match status" value="1"/>
</dbReference>
<dbReference type="Gene3D" id="2.40.150.20">
    <property type="entry name" value="Ribosomal protein L14"/>
    <property type="match status" value="1"/>
</dbReference>
<dbReference type="HAMAP" id="MF_01367">
    <property type="entry name" value="Ribosomal_uL14"/>
    <property type="match status" value="1"/>
</dbReference>
<dbReference type="InterPro" id="IPR000218">
    <property type="entry name" value="Ribosomal_uL14"/>
</dbReference>
<dbReference type="InterPro" id="IPR005745">
    <property type="entry name" value="Ribosomal_uL14_bac-type"/>
</dbReference>
<dbReference type="InterPro" id="IPR019972">
    <property type="entry name" value="Ribosomal_uL14_CS"/>
</dbReference>
<dbReference type="InterPro" id="IPR036853">
    <property type="entry name" value="Ribosomal_uL14_sf"/>
</dbReference>
<dbReference type="NCBIfam" id="TIGR01067">
    <property type="entry name" value="rplN_bact"/>
    <property type="match status" value="1"/>
</dbReference>
<dbReference type="PANTHER" id="PTHR11761">
    <property type="entry name" value="50S/60S RIBOSOMAL PROTEIN L14/L23"/>
    <property type="match status" value="1"/>
</dbReference>
<dbReference type="PANTHER" id="PTHR11761:SF3">
    <property type="entry name" value="LARGE RIBOSOMAL SUBUNIT PROTEIN UL14M"/>
    <property type="match status" value="1"/>
</dbReference>
<dbReference type="Pfam" id="PF00238">
    <property type="entry name" value="Ribosomal_L14"/>
    <property type="match status" value="1"/>
</dbReference>
<dbReference type="SMART" id="SM01374">
    <property type="entry name" value="Ribosomal_L14"/>
    <property type="match status" value="1"/>
</dbReference>
<dbReference type="SUPFAM" id="SSF50193">
    <property type="entry name" value="Ribosomal protein L14"/>
    <property type="match status" value="1"/>
</dbReference>
<dbReference type="PROSITE" id="PS00049">
    <property type="entry name" value="RIBOSOMAL_L14"/>
    <property type="match status" value="1"/>
</dbReference>
<protein>
    <recommendedName>
        <fullName evidence="1">Large ribosomal subunit protein uL14</fullName>
    </recommendedName>
    <alternativeName>
        <fullName evidence="2">50S ribosomal protein L14</fullName>
    </alternativeName>
</protein>
<organism>
    <name type="scientific">Nitrosococcus oceani (strain ATCC 19707 / BCRC 17464 / JCM 30415 / NCIMB 11848 / C-107)</name>
    <dbReference type="NCBI Taxonomy" id="323261"/>
    <lineage>
        <taxon>Bacteria</taxon>
        <taxon>Pseudomonadati</taxon>
        <taxon>Pseudomonadota</taxon>
        <taxon>Gammaproteobacteria</taxon>
        <taxon>Chromatiales</taxon>
        <taxon>Chromatiaceae</taxon>
        <taxon>Nitrosococcus</taxon>
    </lineage>
</organism>
<reference key="1">
    <citation type="journal article" date="2006" name="Appl. Environ. Microbiol.">
        <title>Complete genome sequence of the marine, chemolithoautotrophic, ammonia-oxidizing bacterium Nitrosococcus oceani ATCC 19707.</title>
        <authorList>
            <person name="Klotz M.G."/>
            <person name="Arp D.J."/>
            <person name="Chain P.S.G."/>
            <person name="El-Sheikh A.F."/>
            <person name="Hauser L.J."/>
            <person name="Hommes N.G."/>
            <person name="Larimer F.W."/>
            <person name="Malfatti S.A."/>
            <person name="Norton J.M."/>
            <person name="Poret-Peterson A.T."/>
            <person name="Vergez L.M."/>
            <person name="Ward B.B."/>
        </authorList>
    </citation>
    <scope>NUCLEOTIDE SEQUENCE [LARGE SCALE GENOMIC DNA]</scope>
    <source>
        <strain>ATCC 19707 / BCRC 17464 / JCM 30415 / NCIMB 11848 / C-107</strain>
    </source>
</reference>
<name>RL14_NITOC</name>
<feature type="chain" id="PRO_1000055652" description="Large ribosomal subunit protein uL14">
    <location>
        <begin position="1"/>
        <end position="122"/>
    </location>
</feature>